<feature type="chain" id="PRO_1000094837" description="Deoxyribose-phosphate aldolase">
    <location>
        <begin position="1"/>
        <end position="226"/>
    </location>
</feature>
<feature type="active site" description="Proton donor/acceptor" evidence="1">
    <location>
        <position position="94"/>
    </location>
</feature>
<feature type="active site" description="Schiff-base intermediate with acetaldehyde" evidence="1">
    <location>
        <position position="156"/>
    </location>
</feature>
<feature type="active site" description="Proton donor/acceptor" evidence="1">
    <location>
        <position position="185"/>
    </location>
</feature>
<evidence type="ECO:0000255" key="1">
    <source>
        <dbReference type="HAMAP-Rule" id="MF_00114"/>
    </source>
</evidence>
<keyword id="KW-0963">Cytoplasm</keyword>
<keyword id="KW-0456">Lyase</keyword>
<keyword id="KW-0704">Schiff base</keyword>
<proteinExistence type="inferred from homology"/>
<organism>
    <name type="scientific">Burkholderia orbicola (strain MC0-3)</name>
    <dbReference type="NCBI Taxonomy" id="406425"/>
    <lineage>
        <taxon>Bacteria</taxon>
        <taxon>Pseudomonadati</taxon>
        <taxon>Pseudomonadota</taxon>
        <taxon>Betaproteobacteria</taxon>
        <taxon>Burkholderiales</taxon>
        <taxon>Burkholderiaceae</taxon>
        <taxon>Burkholderia</taxon>
        <taxon>Burkholderia cepacia complex</taxon>
        <taxon>Burkholderia orbicola</taxon>
    </lineage>
</organism>
<sequence>MPLSNAQLAQTIDHTLLAPDASDAQIRELCRQAAEHRFYSVCVNSANVPLAARELAETGVLVCAVVGFPLGAGLSAAKAFEATAAIAAGAGEIDMVINLGALKSGRADDVKADIDAVHRACGTVPLKVILETGLLTDDEKVRVCEMCRDLGVAFVKTSTGFGHGGATLADVALMRRTVGPTLGVKASGGVRDRAAALAMLEAGATRLGTSSGVAIVTDQGGGAAGY</sequence>
<dbReference type="EC" id="4.1.2.4" evidence="1"/>
<dbReference type="EMBL" id="CP000960">
    <property type="protein sequence ID" value="ACA96047.1"/>
    <property type="molecule type" value="Genomic_DNA"/>
</dbReference>
<dbReference type="RefSeq" id="WP_011545737.1">
    <property type="nucleotide sequence ID" value="NC_010512.1"/>
</dbReference>
<dbReference type="SMR" id="B1KCV0"/>
<dbReference type="GeneID" id="83053550"/>
<dbReference type="KEGG" id="bcm:Bcenmc03_6946"/>
<dbReference type="HOGENOM" id="CLU_053595_0_1_4"/>
<dbReference type="UniPathway" id="UPA00002">
    <property type="reaction ID" value="UER00468"/>
</dbReference>
<dbReference type="Proteomes" id="UP000002169">
    <property type="component" value="Chromosome 3"/>
</dbReference>
<dbReference type="GO" id="GO:0005737">
    <property type="term" value="C:cytoplasm"/>
    <property type="evidence" value="ECO:0007669"/>
    <property type="project" value="UniProtKB-SubCell"/>
</dbReference>
<dbReference type="GO" id="GO:0004139">
    <property type="term" value="F:deoxyribose-phosphate aldolase activity"/>
    <property type="evidence" value="ECO:0007669"/>
    <property type="project" value="UniProtKB-UniRule"/>
</dbReference>
<dbReference type="GO" id="GO:0006018">
    <property type="term" value="P:2-deoxyribose 1-phosphate catabolic process"/>
    <property type="evidence" value="ECO:0007669"/>
    <property type="project" value="UniProtKB-UniRule"/>
</dbReference>
<dbReference type="GO" id="GO:0016052">
    <property type="term" value="P:carbohydrate catabolic process"/>
    <property type="evidence" value="ECO:0007669"/>
    <property type="project" value="TreeGrafter"/>
</dbReference>
<dbReference type="GO" id="GO:0009264">
    <property type="term" value="P:deoxyribonucleotide catabolic process"/>
    <property type="evidence" value="ECO:0007669"/>
    <property type="project" value="InterPro"/>
</dbReference>
<dbReference type="CDD" id="cd00959">
    <property type="entry name" value="DeoC"/>
    <property type="match status" value="1"/>
</dbReference>
<dbReference type="FunFam" id="3.20.20.70:FF:000044">
    <property type="entry name" value="Deoxyribose-phosphate aldolase"/>
    <property type="match status" value="1"/>
</dbReference>
<dbReference type="Gene3D" id="3.20.20.70">
    <property type="entry name" value="Aldolase class I"/>
    <property type="match status" value="1"/>
</dbReference>
<dbReference type="HAMAP" id="MF_00114">
    <property type="entry name" value="DeoC_type1"/>
    <property type="match status" value="1"/>
</dbReference>
<dbReference type="InterPro" id="IPR013785">
    <property type="entry name" value="Aldolase_TIM"/>
</dbReference>
<dbReference type="InterPro" id="IPR011343">
    <property type="entry name" value="DeoC"/>
</dbReference>
<dbReference type="InterPro" id="IPR002915">
    <property type="entry name" value="DeoC/FbaB/LacD_aldolase"/>
</dbReference>
<dbReference type="InterPro" id="IPR028581">
    <property type="entry name" value="DeoC_typeI"/>
</dbReference>
<dbReference type="NCBIfam" id="TIGR00126">
    <property type="entry name" value="deoC"/>
    <property type="match status" value="1"/>
</dbReference>
<dbReference type="PANTHER" id="PTHR10889">
    <property type="entry name" value="DEOXYRIBOSE-PHOSPHATE ALDOLASE"/>
    <property type="match status" value="1"/>
</dbReference>
<dbReference type="PANTHER" id="PTHR10889:SF1">
    <property type="entry name" value="DEOXYRIBOSE-PHOSPHATE ALDOLASE"/>
    <property type="match status" value="1"/>
</dbReference>
<dbReference type="Pfam" id="PF01791">
    <property type="entry name" value="DeoC"/>
    <property type="match status" value="1"/>
</dbReference>
<dbReference type="PIRSF" id="PIRSF001357">
    <property type="entry name" value="DeoC"/>
    <property type="match status" value="1"/>
</dbReference>
<dbReference type="SMART" id="SM01133">
    <property type="entry name" value="DeoC"/>
    <property type="match status" value="1"/>
</dbReference>
<dbReference type="SUPFAM" id="SSF51569">
    <property type="entry name" value="Aldolase"/>
    <property type="match status" value="1"/>
</dbReference>
<gene>
    <name evidence="1" type="primary">deoC</name>
    <name type="ordered locus">Bcenmc03_6946</name>
</gene>
<reference key="1">
    <citation type="submission" date="2008-02" db="EMBL/GenBank/DDBJ databases">
        <title>Complete sequence of chromosome 3 of Burkholderia cenocepacia MC0-3.</title>
        <authorList>
            <person name="Copeland A."/>
            <person name="Lucas S."/>
            <person name="Lapidus A."/>
            <person name="Barry K."/>
            <person name="Bruce D."/>
            <person name="Goodwin L."/>
            <person name="Glavina del Rio T."/>
            <person name="Dalin E."/>
            <person name="Tice H."/>
            <person name="Pitluck S."/>
            <person name="Chain P."/>
            <person name="Malfatti S."/>
            <person name="Shin M."/>
            <person name="Vergez L."/>
            <person name="Schmutz J."/>
            <person name="Larimer F."/>
            <person name="Land M."/>
            <person name="Hauser L."/>
            <person name="Kyrpides N."/>
            <person name="Mikhailova N."/>
            <person name="Tiedje J."/>
            <person name="Richardson P."/>
        </authorList>
    </citation>
    <scope>NUCLEOTIDE SEQUENCE [LARGE SCALE GENOMIC DNA]</scope>
    <source>
        <strain>MC0-3</strain>
    </source>
</reference>
<comment type="function">
    <text evidence="1">Catalyzes a reversible aldol reaction between acetaldehyde and D-glyceraldehyde 3-phosphate to generate 2-deoxy-D-ribose 5-phosphate.</text>
</comment>
<comment type="catalytic activity">
    <reaction evidence="1">
        <text>2-deoxy-D-ribose 5-phosphate = D-glyceraldehyde 3-phosphate + acetaldehyde</text>
        <dbReference type="Rhea" id="RHEA:12821"/>
        <dbReference type="ChEBI" id="CHEBI:15343"/>
        <dbReference type="ChEBI" id="CHEBI:59776"/>
        <dbReference type="ChEBI" id="CHEBI:62877"/>
        <dbReference type="EC" id="4.1.2.4"/>
    </reaction>
</comment>
<comment type="pathway">
    <text evidence="1">Carbohydrate degradation; 2-deoxy-D-ribose 1-phosphate degradation; D-glyceraldehyde 3-phosphate and acetaldehyde from 2-deoxy-alpha-D-ribose 1-phosphate: step 2/2.</text>
</comment>
<comment type="subcellular location">
    <subcellularLocation>
        <location evidence="1">Cytoplasm</location>
    </subcellularLocation>
</comment>
<comment type="similarity">
    <text evidence="1">Belongs to the DeoC/FbaB aldolase family. DeoC type 1 subfamily.</text>
</comment>
<name>DEOC_BURO0</name>
<accession>B1KCV0</accession>
<protein>
    <recommendedName>
        <fullName evidence="1">Deoxyribose-phosphate aldolase</fullName>
        <shortName evidence="1">DERA</shortName>
        <ecNumber evidence="1">4.1.2.4</ecNumber>
    </recommendedName>
    <alternativeName>
        <fullName evidence="1">2-deoxy-D-ribose 5-phosphate aldolase</fullName>
    </alternativeName>
    <alternativeName>
        <fullName evidence="1">Phosphodeoxyriboaldolase</fullName>
        <shortName evidence="1">Deoxyriboaldolase</shortName>
    </alternativeName>
</protein>